<evidence type="ECO:0000250" key="1"/>
<evidence type="ECO:0000255" key="2">
    <source>
        <dbReference type="PROSITE-ProRule" id="PRU00291"/>
    </source>
</evidence>
<evidence type="ECO:0000305" key="3"/>
<comment type="function">
    <text evidence="1">Negative regulator of cell proliferation in the adaxial side of leaves. Regulates the formation of a symmetric lamina and the establishment of venation (By similarity).</text>
</comment>
<comment type="subcellular location">
    <subcellularLocation>
        <location evidence="1">Nucleus</location>
    </subcellularLocation>
</comment>
<comment type="similarity">
    <text evidence="3">Belongs to the LOB domain-containing protein family.</text>
</comment>
<keyword id="KW-0217">Developmental protein</keyword>
<keyword id="KW-0539">Nucleus</keyword>
<keyword id="KW-1185">Reference proteome</keyword>
<protein>
    <recommendedName>
        <fullName>LOB domain-containing protein 6</fullName>
    </recommendedName>
    <alternativeName>
        <fullName>Crown rootless-like protein 3</fullName>
    </alternativeName>
    <alternativeName>
        <fullName>Protein ASYMMETRIC LEAVES 2</fullName>
    </alternativeName>
</protein>
<dbReference type="EMBL" id="CM000126">
    <property type="protein sequence ID" value="EAY76776.1"/>
    <property type="molecule type" value="Genomic_DNA"/>
</dbReference>
<dbReference type="SMR" id="A2WXT0"/>
<dbReference type="STRING" id="39946.A2WXT0"/>
<dbReference type="EnsemblPlants" id="BGIOSGA004955-TA">
    <property type="protein sequence ID" value="BGIOSGA004955-PA"/>
    <property type="gene ID" value="BGIOSGA004955"/>
</dbReference>
<dbReference type="EnsemblPlants" id="OsGoSa_01g0042290.01">
    <property type="protein sequence ID" value="OsGoSa_01g0042290.01"/>
    <property type="gene ID" value="OsGoSa_01g0042290"/>
</dbReference>
<dbReference type="EnsemblPlants" id="OsGoSa_01g0042290.02">
    <property type="protein sequence ID" value="OsGoSa_01g0042290.02"/>
    <property type="gene ID" value="OsGoSa_01g0042290"/>
</dbReference>
<dbReference type="EnsemblPlants" id="OsGoSa_01g0042290.03">
    <property type="protein sequence ID" value="OsGoSa_01g0042290.03"/>
    <property type="gene ID" value="OsGoSa_01g0042290"/>
</dbReference>
<dbReference type="EnsemblPlants" id="OsIR64_01g0041720.01">
    <property type="protein sequence ID" value="OsIR64_01g0041720.01"/>
    <property type="gene ID" value="OsIR64_01g0041720"/>
</dbReference>
<dbReference type="EnsemblPlants" id="OsIR64_01g0041720.02">
    <property type="protein sequence ID" value="OsIR64_01g0041720.02"/>
    <property type="gene ID" value="OsIR64_01g0041720"/>
</dbReference>
<dbReference type="EnsemblPlants" id="OsKYG_01g0042010.01">
    <property type="protein sequence ID" value="OsKYG_01g0042010.01"/>
    <property type="gene ID" value="OsKYG_01g0042010"/>
</dbReference>
<dbReference type="EnsemblPlants" id="OsKYG_01g0042010.02">
    <property type="protein sequence ID" value="OsKYG_01g0042010.02"/>
    <property type="gene ID" value="OsKYG_01g0042010"/>
</dbReference>
<dbReference type="EnsemblPlants" id="OsLaMu_01g0042080.01">
    <property type="protein sequence ID" value="OsLaMu_01g0042080.01"/>
    <property type="gene ID" value="OsLaMu_01g0042080"/>
</dbReference>
<dbReference type="EnsemblPlants" id="OsLaMu_01g0042080.02">
    <property type="protein sequence ID" value="OsLaMu_01g0042080.02"/>
    <property type="gene ID" value="OsLaMu_01g0042080"/>
</dbReference>
<dbReference type="EnsemblPlants" id="OsLima_01g0042060.01">
    <property type="protein sequence ID" value="OsLima_01g0042060.01"/>
    <property type="gene ID" value="OsLima_01g0042060"/>
</dbReference>
<dbReference type="EnsemblPlants" id="OsLima_01g0042060.02">
    <property type="protein sequence ID" value="OsLima_01g0042060.02"/>
    <property type="gene ID" value="OsLima_01g0042060"/>
</dbReference>
<dbReference type="EnsemblPlants" id="OsLiXu_01g0042220.01">
    <property type="protein sequence ID" value="OsLiXu_01g0042220.01"/>
    <property type="gene ID" value="OsLiXu_01g0042220"/>
</dbReference>
<dbReference type="EnsemblPlants" id="OsLiXu_01g0042220.02">
    <property type="protein sequence ID" value="OsLiXu_01g0042220.02"/>
    <property type="gene ID" value="OsLiXu_01g0042220"/>
</dbReference>
<dbReference type="EnsemblPlants" id="OsLiXu_01g0042220.03">
    <property type="protein sequence ID" value="OsLiXu_01g0042220.03"/>
    <property type="gene ID" value="OsLiXu_01g0042220"/>
</dbReference>
<dbReference type="EnsemblPlants" id="OsMH63_01G042920_01">
    <property type="protein sequence ID" value="OsMH63_01G042920_01"/>
    <property type="gene ID" value="OsMH63_01G042920"/>
</dbReference>
<dbReference type="EnsemblPlants" id="OsMH63_01G042920_02">
    <property type="protein sequence ID" value="OsMH63_01G042920_02"/>
    <property type="gene ID" value="OsMH63_01G042920"/>
</dbReference>
<dbReference type="EnsemblPlants" id="OsMH63_01G042920_03">
    <property type="protein sequence ID" value="OsMH63_01G042920_03"/>
    <property type="gene ID" value="OsMH63_01G042920"/>
</dbReference>
<dbReference type="EnsemblPlants" id="OsPr106_01g0042090.01">
    <property type="protein sequence ID" value="OsPr106_01g0042090.01"/>
    <property type="gene ID" value="OsPr106_01g0042090"/>
</dbReference>
<dbReference type="EnsemblPlants" id="OsPr106_01g0042090.02">
    <property type="protein sequence ID" value="OsPr106_01g0042090.02"/>
    <property type="gene ID" value="OsPr106_01g0042090"/>
</dbReference>
<dbReference type="EnsemblPlants" id="OsPr106_01g0042090.03">
    <property type="protein sequence ID" value="OsPr106_01g0042090.03"/>
    <property type="gene ID" value="OsPr106_01g0042090"/>
</dbReference>
<dbReference type="EnsemblPlants" id="OsZS97_01G042270_01">
    <property type="protein sequence ID" value="OsZS97_01G042270_01"/>
    <property type="gene ID" value="OsZS97_01G042270"/>
</dbReference>
<dbReference type="EnsemblPlants" id="OsZS97_01G042270_02">
    <property type="protein sequence ID" value="OsZS97_01G042270_02"/>
    <property type="gene ID" value="OsZS97_01G042270"/>
</dbReference>
<dbReference type="Gramene" id="BGIOSGA004955-TA">
    <property type="protein sequence ID" value="BGIOSGA004955-PA"/>
    <property type="gene ID" value="BGIOSGA004955"/>
</dbReference>
<dbReference type="Gramene" id="OsGoSa_01g0042290.01">
    <property type="protein sequence ID" value="OsGoSa_01g0042290.01"/>
    <property type="gene ID" value="OsGoSa_01g0042290"/>
</dbReference>
<dbReference type="Gramene" id="OsGoSa_01g0042290.02">
    <property type="protein sequence ID" value="OsGoSa_01g0042290.02"/>
    <property type="gene ID" value="OsGoSa_01g0042290"/>
</dbReference>
<dbReference type="Gramene" id="OsGoSa_01g0042290.03">
    <property type="protein sequence ID" value="OsGoSa_01g0042290.03"/>
    <property type="gene ID" value="OsGoSa_01g0042290"/>
</dbReference>
<dbReference type="Gramene" id="OsIR64_01g0041720.01">
    <property type="protein sequence ID" value="OsIR64_01g0041720.01"/>
    <property type="gene ID" value="OsIR64_01g0041720"/>
</dbReference>
<dbReference type="Gramene" id="OsIR64_01g0041720.02">
    <property type="protein sequence ID" value="OsIR64_01g0041720.02"/>
    <property type="gene ID" value="OsIR64_01g0041720"/>
</dbReference>
<dbReference type="Gramene" id="OsKYG_01g0042010.01">
    <property type="protein sequence ID" value="OsKYG_01g0042010.01"/>
    <property type="gene ID" value="OsKYG_01g0042010"/>
</dbReference>
<dbReference type="Gramene" id="OsKYG_01g0042010.02">
    <property type="protein sequence ID" value="OsKYG_01g0042010.02"/>
    <property type="gene ID" value="OsKYG_01g0042010"/>
</dbReference>
<dbReference type="Gramene" id="OsLaMu_01g0042080.01">
    <property type="protein sequence ID" value="OsLaMu_01g0042080.01"/>
    <property type="gene ID" value="OsLaMu_01g0042080"/>
</dbReference>
<dbReference type="Gramene" id="OsLaMu_01g0042080.02">
    <property type="protein sequence ID" value="OsLaMu_01g0042080.02"/>
    <property type="gene ID" value="OsLaMu_01g0042080"/>
</dbReference>
<dbReference type="Gramene" id="OsLima_01g0042060.01">
    <property type="protein sequence ID" value="OsLima_01g0042060.01"/>
    <property type="gene ID" value="OsLima_01g0042060"/>
</dbReference>
<dbReference type="Gramene" id="OsLima_01g0042060.02">
    <property type="protein sequence ID" value="OsLima_01g0042060.02"/>
    <property type="gene ID" value="OsLima_01g0042060"/>
</dbReference>
<dbReference type="Gramene" id="OsLiXu_01g0042220.01">
    <property type="protein sequence ID" value="OsLiXu_01g0042220.01"/>
    <property type="gene ID" value="OsLiXu_01g0042220"/>
</dbReference>
<dbReference type="Gramene" id="OsLiXu_01g0042220.02">
    <property type="protein sequence ID" value="OsLiXu_01g0042220.02"/>
    <property type="gene ID" value="OsLiXu_01g0042220"/>
</dbReference>
<dbReference type="Gramene" id="OsLiXu_01g0042220.03">
    <property type="protein sequence ID" value="OsLiXu_01g0042220.03"/>
    <property type="gene ID" value="OsLiXu_01g0042220"/>
</dbReference>
<dbReference type="Gramene" id="OsMH63_01G042920_01">
    <property type="protein sequence ID" value="OsMH63_01G042920_01"/>
    <property type="gene ID" value="OsMH63_01G042920"/>
</dbReference>
<dbReference type="Gramene" id="OsMH63_01G042920_02">
    <property type="protein sequence ID" value="OsMH63_01G042920_02"/>
    <property type="gene ID" value="OsMH63_01G042920"/>
</dbReference>
<dbReference type="Gramene" id="OsMH63_01G042920_03">
    <property type="protein sequence ID" value="OsMH63_01G042920_03"/>
    <property type="gene ID" value="OsMH63_01G042920"/>
</dbReference>
<dbReference type="Gramene" id="OsPr106_01g0042090.01">
    <property type="protein sequence ID" value="OsPr106_01g0042090.01"/>
    <property type="gene ID" value="OsPr106_01g0042090"/>
</dbReference>
<dbReference type="Gramene" id="OsPr106_01g0042090.02">
    <property type="protein sequence ID" value="OsPr106_01g0042090.02"/>
    <property type="gene ID" value="OsPr106_01g0042090"/>
</dbReference>
<dbReference type="Gramene" id="OsPr106_01g0042090.03">
    <property type="protein sequence ID" value="OsPr106_01g0042090.03"/>
    <property type="gene ID" value="OsPr106_01g0042090"/>
</dbReference>
<dbReference type="Gramene" id="OsZS97_01G042270_01">
    <property type="protein sequence ID" value="OsZS97_01G042270_01"/>
    <property type="gene ID" value="OsZS97_01G042270"/>
</dbReference>
<dbReference type="Gramene" id="OsZS97_01G042270_02">
    <property type="protein sequence ID" value="OsZS97_01G042270_02"/>
    <property type="gene ID" value="OsZS97_01G042270"/>
</dbReference>
<dbReference type="HOGENOM" id="CLU_058353_1_2_1"/>
<dbReference type="OMA" id="DEWAYVS"/>
<dbReference type="OrthoDB" id="2016447at2759"/>
<dbReference type="Proteomes" id="UP000007015">
    <property type="component" value="Chromosome 1"/>
</dbReference>
<dbReference type="GO" id="GO:0005634">
    <property type="term" value="C:nucleus"/>
    <property type="evidence" value="ECO:0007669"/>
    <property type="project" value="UniProtKB-SubCell"/>
</dbReference>
<dbReference type="InterPro" id="IPR004883">
    <property type="entry name" value="LOB"/>
</dbReference>
<dbReference type="PANTHER" id="PTHR31301">
    <property type="entry name" value="LOB DOMAIN-CONTAINING PROTEIN 4-RELATED"/>
    <property type="match status" value="1"/>
</dbReference>
<dbReference type="PANTHER" id="PTHR31301:SF83">
    <property type="entry name" value="PROTEIN ASYMMETRIC LEAVES 2"/>
    <property type="match status" value="1"/>
</dbReference>
<dbReference type="Pfam" id="PF03195">
    <property type="entry name" value="LOB"/>
    <property type="match status" value="1"/>
</dbReference>
<dbReference type="PROSITE" id="PS50891">
    <property type="entry name" value="LOB"/>
    <property type="match status" value="1"/>
</dbReference>
<organism>
    <name type="scientific">Oryza sativa subsp. indica</name>
    <name type="common">Rice</name>
    <dbReference type="NCBI Taxonomy" id="39946"/>
    <lineage>
        <taxon>Eukaryota</taxon>
        <taxon>Viridiplantae</taxon>
        <taxon>Streptophyta</taxon>
        <taxon>Embryophyta</taxon>
        <taxon>Tracheophyta</taxon>
        <taxon>Spermatophyta</taxon>
        <taxon>Magnoliopsida</taxon>
        <taxon>Liliopsida</taxon>
        <taxon>Poales</taxon>
        <taxon>Poaceae</taxon>
        <taxon>BOP clade</taxon>
        <taxon>Oryzoideae</taxon>
        <taxon>Oryzeae</taxon>
        <taxon>Oryzinae</taxon>
        <taxon>Oryza</taxon>
        <taxon>Oryza sativa</taxon>
    </lineage>
</organism>
<sequence>MASSSASSVPAPSGSVITIASASASAAANTAACGTGSPCAACKFLRRKCQPDCVFAPYFPPDNPQKFVHVHRVFGASNVTKLLNELHPYQREDAVNSLAYEADMRLRDPVYGCVAIISILQRNLRQLQQDLARAKFELSKYQQAAAAAAAASASTGTNNGPHSMAEFIGNAVPNGAQSFINVGHSAALASVGGAAACFGQEQQFSAVHMLSRSYEGEPIARLGGNGGYEFGYSTSMAGGGHMSGLGALGGAPFLKSGIAGSDERQGAGQ</sequence>
<accession>A2WXT0</accession>
<feature type="chain" id="PRO_0000299139" description="LOB domain-containing protein 6">
    <location>
        <begin position="1"/>
        <end position="269"/>
    </location>
</feature>
<feature type="domain" description="LOB" evidence="2">
    <location>
        <begin position="37"/>
        <end position="138"/>
    </location>
</feature>
<name>LBD6_ORYSI</name>
<gene>
    <name type="primary">LBD6</name>
    <name type="synonym">AS2</name>
    <name type="synonym">CRLL3</name>
    <name type="ORF">OsI_004623</name>
</gene>
<proteinExistence type="inferred from homology"/>
<reference key="1">
    <citation type="journal article" date="2005" name="PLoS Biol.">
        <title>The genomes of Oryza sativa: a history of duplications.</title>
        <authorList>
            <person name="Yu J."/>
            <person name="Wang J."/>
            <person name="Lin W."/>
            <person name="Li S."/>
            <person name="Li H."/>
            <person name="Zhou J."/>
            <person name="Ni P."/>
            <person name="Dong W."/>
            <person name="Hu S."/>
            <person name="Zeng C."/>
            <person name="Zhang J."/>
            <person name="Zhang Y."/>
            <person name="Li R."/>
            <person name="Xu Z."/>
            <person name="Li S."/>
            <person name="Li X."/>
            <person name="Zheng H."/>
            <person name="Cong L."/>
            <person name="Lin L."/>
            <person name="Yin J."/>
            <person name="Geng J."/>
            <person name="Li G."/>
            <person name="Shi J."/>
            <person name="Liu J."/>
            <person name="Lv H."/>
            <person name="Li J."/>
            <person name="Wang J."/>
            <person name="Deng Y."/>
            <person name="Ran L."/>
            <person name="Shi X."/>
            <person name="Wang X."/>
            <person name="Wu Q."/>
            <person name="Li C."/>
            <person name="Ren X."/>
            <person name="Wang J."/>
            <person name="Wang X."/>
            <person name="Li D."/>
            <person name="Liu D."/>
            <person name="Zhang X."/>
            <person name="Ji Z."/>
            <person name="Zhao W."/>
            <person name="Sun Y."/>
            <person name="Zhang Z."/>
            <person name="Bao J."/>
            <person name="Han Y."/>
            <person name="Dong L."/>
            <person name="Ji J."/>
            <person name="Chen P."/>
            <person name="Wu S."/>
            <person name="Liu J."/>
            <person name="Xiao Y."/>
            <person name="Bu D."/>
            <person name="Tan J."/>
            <person name="Yang L."/>
            <person name="Ye C."/>
            <person name="Zhang J."/>
            <person name="Xu J."/>
            <person name="Zhou Y."/>
            <person name="Yu Y."/>
            <person name="Zhang B."/>
            <person name="Zhuang S."/>
            <person name="Wei H."/>
            <person name="Liu B."/>
            <person name="Lei M."/>
            <person name="Yu H."/>
            <person name="Li Y."/>
            <person name="Xu H."/>
            <person name="Wei S."/>
            <person name="He X."/>
            <person name="Fang L."/>
            <person name="Zhang Z."/>
            <person name="Zhang Y."/>
            <person name="Huang X."/>
            <person name="Su Z."/>
            <person name="Tong W."/>
            <person name="Li J."/>
            <person name="Tong Z."/>
            <person name="Li S."/>
            <person name="Ye J."/>
            <person name="Wang L."/>
            <person name="Fang L."/>
            <person name="Lei T."/>
            <person name="Chen C.-S."/>
            <person name="Chen H.-C."/>
            <person name="Xu Z."/>
            <person name="Li H."/>
            <person name="Huang H."/>
            <person name="Zhang F."/>
            <person name="Xu H."/>
            <person name="Li N."/>
            <person name="Zhao C."/>
            <person name="Li S."/>
            <person name="Dong L."/>
            <person name="Huang Y."/>
            <person name="Li L."/>
            <person name="Xi Y."/>
            <person name="Qi Q."/>
            <person name="Li W."/>
            <person name="Zhang B."/>
            <person name="Hu W."/>
            <person name="Zhang Y."/>
            <person name="Tian X."/>
            <person name="Jiao Y."/>
            <person name="Liang X."/>
            <person name="Jin J."/>
            <person name="Gao L."/>
            <person name="Zheng W."/>
            <person name="Hao B."/>
            <person name="Liu S.-M."/>
            <person name="Wang W."/>
            <person name="Yuan L."/>
            <person name="Cao M."/>
            <person name="McDermott J."/>
            <person name="Samudrala R."/>
            <person name="Wang J."/>
            <person name="Wong G.K.-S."/>
            <person name="Yang H."/>
        </authorList>
    </citation>
    <scope>NUCLEOTIDE SEQUENCE [LARGE SCALE GENOMIC DNA]</scope>
    <source>
        <strain>cv. 93-11</strain>
    </source>
</reference>